<sequence length="208" mass="22057">MSPADSLLAAADNALRTLFAKPGAAEKSPADAVAEAALDPAEKRLAGALMRVNHVGEVCAQALYTAQAALTRDARLRARLQQAAREEIDHLAWTRQRLDALGARTSLLDPLWFAGAFALGLVAAKVGDRVSLGFVAETESQVAAHLQSHLQRLPQQDLASRAVVARMKDDEERHAAQARASGALALPAPVRAAMKAAARLMTSTAHYV</sequence>
<name>COQ7_VEREI</name>
<dbReference type="EC" id="1.14.99.60" evidence="1"/>
<dbReference type="EMBL" id="CP000542">
    <property type="protein sequence ID" value="ABM57073.1"/>
    <property type="molecule type" value="Genomic_DNA"/>
</dbReference>
<dbReference type="RefSeq" id="WP_011809083.1">
    <property type="nucleotide sequence ID" value="NC_008786.1"/>
</dbReference>
<dbReference type="SMR" id="A1WHG6"/>
<dbReference type="STRING" id="391735.Veis_1305"/>
<dbReference type="GeneID" id="76459951"/>
<dbReference type="KEGG" id="vei:Veis_1305"/>
<dbReference type="eggNOG" id="COG2941">
    <property type="taxonomic scope" value="Bacteria"/>
</dbReference>
<dbReference type="HOGENOM" id="CLU_088601_0_0_4"/>
<dbReference type="OrthoDB" id="5192789at2"/>
<dbReference type="UniPathway" id="UPA00232"/>
<dbReference type="Proteomes" id="UP000000374">
    <property type="component" value="Chromosome"/>
</dbReference>
<dbReference type="GO" id="GO:0005886">
    <property type="term" value="C:plasma membrane"/>
    <property type="evidence" value="ECO:0007669"/>
    <property type="project" value="UniProtKB-SubCell"/>
</dbReference>
<dbReference type="GO" id="GO:0008682">
    <property type="term" value="F:3-demethoxyubiquinol 3-hydroxylase activity"/>
    <property type="evidence" value="ECO:0007669"/>
    <property type="project" value="UniProtKB-EC"/>
</dbReference>
<dbReference type="GO" id="GO:0046872">
    <property type="term" value="F:metal ion binding"/>
    <property type="evidence" value="ECO:0007669"/>
    <property type="project" value="UniProtKB-KW"/>
</dbReference>
<dbReference type="GO" id="GO:0006744">
    <property type="term" value="P:ubiquinone biosynthetic process"/>
    <property type="evidence" value="ECO:0007669"/>
    <property type="project" value="UniProtKB-UniRule"/>
</dbReference>
<dbReference type="CDD" id="cd01042">
    <property type="entry name" value="DMQH"/>
    <property type="match status" value="1"/>
</dbReference>
<dbReference type="Gene3D" id="1.20.1260.10">
    <property type="match status" value="1"/>
</dbReference>
<dbReference type="HAMAP" id="MF_01658">
    <property type="entry name" value="COQ7"/>
    <property type="match status" value="1"/>
</dbReference>
<dbReference type="InterPro" id="IPR047809">
    <property type="entry name" value="COQ7_proteobact"/>
</dbReference>
<dbReference type="InterPro" id="IPR012347">
    <property type="entry name" value="Ferritin-like"/>
</dbReference>
<dbReference type="InterPro" id="IPR009078">
    <property type="entry name" value="Ferritin-like_SF"/>
</dbReference>
<dbReference type="InterPro" id="IPR011566">
    <property type="entry name" value="Ubq_synth_Coq7"/>
</dbReference>
<dbReference type="NCBIfam" id="NF033656">
    <property type="entry name" value="DMQ_monoox_COQ7"/>
    <property type="match status" value="1"/>
</dbReference>
<dbReference type="PANTHER" id="PTHR11237:SF4">
    <property type="entry name" value="5-DEMETHOXYUBIQUINONE HYDROXYLASE, MITOCHONDRIAL"/>
    <property type="match status" value="1"/>
</dbReference>
<dbReference type="PANTHER" id="PTHR11237">
    <property type="entry name" value="COENZYME Q10 BIOSYNTHESIS PROTEIN 7"/>
    <property type="match status" value="1"/>
</dbReference>
<dbReference type="Pfam" id="PF03232">
    <property type="entry name" value="COQ7"/>
    <property type="match status" value="1"/>
</dbReference>
<dbReference type="SUPFAM" id="SSF47240">
    <property type="entry name" value="Ferritin-like"/>
    <property type="match status" value="1"/>
</dbReference>
<gene>
    <name evidence="1" type="primary">coq7</name>
    <name type="ordered locus">Veis_1305</name>
</gene>
<comment type="function">
    <text evidence="1">Catalyzes the hydroxylation of 2-nonaprenyl-3-methyl-6-methoxy-1,4-benzoquinol during ubiquinone biosynthesis.</text>
</comment>
<comment type="catalytic activity">
    <reaction evidence="1">
        <text>a 5-methoxy-2-methyl-3-(all-trans-polyprenyl)benzene-1,4-diol + AH2 + O2 = a 3-demethylubiquinol + A + H2O</text>
        <dbReference type="Rhea" id="RHEA:50908"/>
        <dbReference type="Rhea" id="RHEA-COMP:10859"/>
        <dbReference type="Rhea" id="RHEA-COMP:10914"/>
        <dbReference type="ChEBI" id="CHEBI:13193"/>
        <dbReference type="ChEBI" id="CHEBI:15377"/>
        <dbReference type="ChEBI" id="CHEBI:15379"/>
        <dbReference type="ChEBI" id="CHEBI:17499"/>
        <dbReference type="ChEBI" id="CHEBI:84167"/>
        <dbReference type="ChEBI" id="CHEBI:84422"/>
        <dbReference type="EC" id="1.14.99.60"/>
    </reaction>
</comment>
<comment type="cofactor">
    <cofactor evidence="1">
        <name>Fe cation</name>
        <dbReference type="ChEBI" id="CHEBI:24875"/>
    </cofactor>
    <text evidence="1">Binds 2 iron ions per subunit.</text>
</comment>
<comment type="pathway">
    <text evidence="1">Cofactor biosynthesis; ubiquinone biosynthesis.</text>
</comment>
<comment type="subcellular location">
    <subcellularLocation>
        <location evidence="1">Cell membrane</location>
        <topology evidence="1">Peripheral membrane protein</topology>
    </subcellularLocation>
</comment>
<comment type="similarity">
    <text evidence="1">Belongs to the COQ7 family.</text>
</comment>
<feature type="chain" id="PRO_0000338732" description="3-demethoxyubiquinol 3-hydroxylase">
    <location>
        <begin position="1"/>
        <end position="208"/>
    </location>
</feature>
<feature type="binding site" evidence="1">
    <location>
        <position position="57"/>
    </location>
    <ligand>
        <name>Fe cation</name>
        <dbReference type="ChEBI" id="CHEBI:24875"/>
        <label>1</label>
    </ligand>
</feature>
<feature type="binding site" evidence="1">
    <location>
        <position position="87"/>
    </location>
    <ligand>
        <name>Fe cation</name>
        <dbReference type="ChEBI" id="CHEBI:24875"/>
        <label>1</label>
    </ligand>
</feature>
<feature type="binding site" evidence="1">
    <location>
        <position position="87"/>
    </location>
    <ligand>
        <name>Fe cation</name>
        <dbReference type="ChEBI" id="CHEBI:24875"/>
        <label>2</label>
    </ligand>
</feature>
<feature type="binding site" evidence="1">
    <location>
        <position position="90"/>
    </location>
    <ligand>
        <name>Fe cation</name>
        <dbReference type="ChEBI" id="CHEBI:24875"/>
        <label>1</label>
    </ligand>
</feature>
<feature type="binding site" evidence="1">
    <location>
        <position position="139"/>
    </location>
    <ligand>
        <name>Fe cation</name>
        <dbReference type="ChEBI" id="CHEBI:24875"/>
        <label>2</label>
    </ligand>
</feature>
<feature type="binding site" evidence="1">
    <location>
        <position position="171"/>
    </location>
    <ligand>
        <name>Fe cation</name>
        <dbReference type="ChEBI" id="CHEBI:24875"/>
        <label>1</label>
    </ligand>
</feature>
<feature type="binding site" evidence="1">
    <location>
        <position position="171"/>
    </location>
    <ligand>
        <name>Fe cation</name>
        <dbReference type="ChEBI" id="CHEBI:24875"/>
        <label>2</label>
    </ligand>
</feature>
<feature type="binding site" evidence="1">
    <location>
        <position position="174"/>
    </location>
    <ligand>
        <name>Fe cation</name>
        <dbReference type="ChEBI" id="CHEBI:24875"/>
        <label>2</label>
    </ligand>
</feature>
<keyword id="KW-1003">Cell membrane</keyword>
<keyword id="KW-0408">Iron</keyword>
<keyword id="KW-0472">Membrane</keyword>
<keyword id="KW-0479">Metal-binding</keyword>
<keyword id="KW-0503">Monooxygenase</keyword>
<keyword id="KW-0560">Oxidoreductase</keyword>
<keyword id="KW-1185">Reference proteome</keyword>
<keyword id="KW-0831">Ubiquinone biosynthesis</keyword>
<organism>
    <name type="scientific">Verminephrobacter eiseniae (strain EF01-2)</name>
    <dbReference type="NCBI Taxonomy" id="391735"/>
    <lineage>
        <taxon>Bacteria</taxon>
        <taxon>Pseudomonadati</taxon>
        <taxon>Pseudomonadota</taxon>
        <taxon>Betaproteobacteria</taxon>
        <taxon>Burkholderiales</taxon>
        <taxon>Comamonadaceae</taxon>
        <taxon>Verminephrobacter</taxon>
    </lineage>
</organism>
<accession>A1WHG6</accession>
<proteinExistence type="inferred from homology"/>
<evidence type="ECO:0000255" key="1">
    <source>
        <dbReference type="HAMAP-Rule" id="MF_01658"/>
    </source>
</evidence>
<reference key="1">
    <citation type="submission" date="2006-12" db="EMBL/GenBank/DDBJ databases">
        <title>Complete sequence of chromosome 1 of Verminephrobacter eiseniae EF01-2.</title>
        <authorList>
            <person name="Copeland A."/>
            <person name="Lucas S."/>
            <person name="Lapidus A."/>
            <person name="Barry K."/>
            <person name="Detter J.C."/>
            <person name="Glavina del Rio T."/>
            <person name="Dalin E."/>
            <person name="Tice H."/>
            <person name="Pitluck S."/>
            <person name="Chertkov O."/>
            <person name="Brettin T."/>
            <person name="Bruce D."/>
            <person name="Han C."/>
            <person name="Tapia R."/>
            <person name="Gilna P."/>
            <person name="Schmutz J."/>
            <person name="Larimer F."/>
            <person name="Land M."/>
            <person name="Hauser L."/>
            <person name="Kyrpides N."/>
            <person name="Kim E."/>
            <person name="Stahl D."/>
            <person name="Richardson P."/>
        </authorList>
    </citation>
    <scope>NUCLEOTIDE SEQUENCE [LARGE SCALE GENOMIC DNA]</scope>
    <source>
        <strain>EF01-2</strain>
    </source>
</reference>
<protein>
    <recommendedName>
        <fullName evidence="1">3-demethoxyubiquinol 3-hydroxylase</fullName>
        <shortName evidence="1">DMQ hydroxylase</shortName>
        <ecNumber evidence="1">1.14.99.60</ecNumber>
    </recommendedName>
    <alternativeName>
        <fullName evidence="1">2-nonaprenyl-3-methyl-6-methoxy-1,4-benzoquinol hydroxylase</fullName>
    </alternativeName>
</protein>